<dbReference type="EMBL" id="CP000647">
    <property type="protein sequence ID" value="ABR79106.1"/>
    <property type="molecule type" value="Genomic_DNA"/>
</dbReference>
<dbReference type="RefSeq" id="WP_002919796.1">
    <property type="nucleotide sequence ID" value="NC_009648.1"/>
</dbReference>
<dbReference type="SMR" id="A6TEX2"/>
<dbReference type="STRING" id="272620.KPN_03719"/>
<dbReference type="jPOST" id="A6TEX2"/>
<dbReference type="PaxDb" id="272620-KPN_03719"/>
<dbReference type="EnsemblBacteria" id="ABR79106">
    <property type="protein sequence ID" value="ABR79106"/>
    <property type="gene ID" value="KPN_03719"/>
</dbReference>
<dbReference type="GeneID" id="93270970"/>
<dbReference type="KEGG" id="kpn:KPN_03719"/>
<dbReference type="HOGENOM" id="CLU_044142_4_1_6"/>
<dbReference type="Proteomes" id="UP000000265">
    <property type="component" value="Chromosome"/>
</dbReference>
<dbReference type="GO" id="GO:0022625">
    <property type="term" value="C:cytosolic large ribosomal subunit"/>
    <property type="evidence" value="ECO:0007669"/>
    <property type="project" value="TreeGrafter"/>
</dbReference>
<dbReference type="GO" id="GO:0019843">
    <property type="term" value="F:rRNA binding"/>
    <property type="evidence" value="ECO:0007669"/>
    <property type="project" value="UniProtKB-UniRule"/>
</dbReference>
<dbReference type="GO" id="GO:0003735">
    <property type="term" value="F:structural constituent of ribosome"/>
    <property type="evidence" value="ECO:0007669"/>
    <property type="project" value="InterPro"/>
</dbReference>
<dbReference type="GO" id="GO:0006412">
    <property type="term" value="P:translation"/>
    <property type="evidence" value="ECO:0007669"/>
    <property type="project" value="UniProtKB-UniRule"/>
</dbReference>
<dbReference type="FunFam" id="2.40.30.10:FF:000004">
    <property type="entry name" value="50S ribosomal protein L3"/>
    <property type="match status" value="1"/>
</dbReference>
<dbReference type="FunFam" id="3.30.160.810:FF:000001">
    <property type="entry name" value="50S ribosomal protein L3"/>
    <property type="match status" value="1"/>
</dbReference>
<dbReference type="Gene3D" id="3.30.160.810">
    <property type="match status" value="1"/>
</dbReference>
<dbReference type="Gene3D" id="2.40.30.10">
    <property type="entry name" value="Translation factors"/>
    <property type="match status" value="1"/>
</dbReference>
<dbReference type="HAMAP" id="MF_01325_B">
    <property type="entry name" value="Ribosomal_uL3_B"/>
    <property type="match status" value="1"/>
</dbReference>
<dbReference type="InterPro" id="IPR000597">
    <property type="entry name" value="Ribosomal_uL3"/>
</dbReference>
<dbReference type="InterPro" id="IPR019927">
    <property type="entry name" value="Ribosomal_uL3_bac/org-type"/>
</dbReference>
<dbReference type="InterPro" id="IPR019926">
    <property type="entry name" value="Ribosomal_uL3_CS"/>
</dbReference>
<dbReference type="InterPro" id="IPR009000">
    <property type="entry name" value="Transl_B-barrel_sf"/>
</dbReference>
<dbReference type="NCBIfam" id="TIGR03625">
    <property type="entry name" value="L3_bact"/>
    <property type="match status" value="1"/>
</dbReference>
<dbReference type="PANTHER" id="PTHR11229">
    <property type="entry name" value="50S RIBOSOMAL PROTEIN L3"/>
    <property type="match status" value="1"/>
</dbReference>
<dbReference type="PANTHER" id="PTHR11229:SF16">
    <property type="entry name" value="LARGE RIBOSOMAL SUBUNIT PROTEIN UL3C"/>
    <property type="match status" value="1"/>
</dbReference>
<dbReference type="Pfam" id="PF00297">
    <property type="entry name" value="Ribosomal_L3"/>
    <property type="match status" value="1"/>
</dbReference>
<dbReference type="SUPFAM" id="SSF50447">
    <property type="entry name" value="Translation proteins"/>
    <property type="match status" value="1"/>
</dbReference>
<dbReference type="PROSITE" id="PS00474">
    <property type="entry name" value="RIBOSOMAL_L3"/>
    <property type="match status" value="1"/>
</dbReference>
<evidence type="ECO:0000255" key="1">
    <source>
        <dbReference type="HAMAP-Rule" id="MF_01325"/>
    </source>
</evidence>
<evidence type="ECO:0000305" key="2"/>
<protein>
    <recommendedName>
        <fullName evidence="1">Large ribosomal subunit protein uL3</fullName>
    </recommendedName>
    <alternativeName>
        <fullName evidence="2">50S ribosomal protein L3</fullName>
    </alternativeName>
</protein>
<feature type="chain" id="PRO_1000052061" description="Large ribosomal subunit protein uL3">
    <location>
        <begin position="1"/>
        <end position="209"/>
    </location>
</feature>
<feature type="modified residue" description="N5-methylglutamine" evidence="1">
    <location>
        <position position="150"/>
    </location>
</feature>
<sequence length="209" mass="22238">MIGLVGKKVGMTRIFTEDGVSIPVTVIEVEANRVTQVKDLANDGYRAIQVTTGAKKANRVTKPEAGHFAKAGVEAGRGLWEFRLADGEEFTVGQNISVELFADVKKVDVTGTSKGKGFAGTVKRWNFRTQDATHGNSLSHRVPGSIGQNQTPGKVFKGKKMAGQLGNERVTVQSLDVVRVDAERNLLLVKGAVPGATGSDLIVKPAVKA</sequence>
<comment type="function">
    <text evidence="1">One of the primary rRNA binding proteins, it binds directly near the 3'-end of the 23S rRNA, where it nucleates assembly of the 50S subunit.</text>
</comment>
<comment type="subunit">
    <text evidence="1">Part of the 50S ribosomal subunit. Forms a cluster with proteins L14 and L19.</text>
</comment>
<comment type="PTM">
    <text evidence="1">Methylated by PrmB.</text>
</comment>
<comment type="similarity">
    <text evidence="1">Belongs to the universal ribosomal protein uL3 family.</text>
</comment>
<organism>
    <name type="scientific">Klebsiella pneumoniae subsp. pneumoniae (strain ATCC 700721 / MGH 78578)</name>
    <dbReference type="NCBI Taxonomy" id="272620"/>
    <lineage>
        <taxon>Bacteria</taxon>
        <taxon>Pseudomonadati</taxon>
        <taxon>Pseudomonadota</taxon>
        <taxon>Gammaproteobacteria</taxon>
        <taxon>Enterobacterales</taxon>
        <taxon>Enterobacteriaceae</taxon>
        <taxon>Klebsiella/Raoultella group</taxon>
        <taxon>Klebsiella</taxon>
        <taxon>Klebsiella pneumoniae complex</taxon>
    </lineage>
</organism>
<gene>
    <name evidence="1" type="primary">rplC</name>
    <name type="ordered locus">KPN78578_36820</name>
    <name type="ORF">KPN_03719</name>
</gene>
<accession>A6TEX2</accession>
<name>RL3_KLEP7</name>
<proteinExistence type="inferred from homology"/>
<reference key="1">
    <citation type="submission" date="2006-09" db="EMBL/GenBank/DDBJ databases">
        <authorList>
            <consortium name="The Klebsiella pneumonia Genome Sequencing Project"/>
            <person name="McClelland M."/>
            <person name="Sanderson E.K."/>
            <person name="Spieth J."/>
            <person name="Clifton W.S."/>
            <person name="Latreille P."/>
            <person name="Sabo A."/>
            <person name="Pepin K."/>
            <person name="Bhonagiri V."/>
            <person name="Porwollik S."/>
            <person name="Ali J."/>
            <person name="Wilson R.K."/>
        </authorList>
    </citation>
    <scope>NUCLEOTIDE SEQUENCE [LARGE SCALE GENOMIC DNA]</scope>
    <source>
        <strain>ATCC 700721 / MGH 78578</strain>
    </source>
</reference>
<keyword id="KW-0488">Methylation</keyword>
<keyword id="KW-0687">Ribonucleoprotein</keyword>
<keyword id="KW-0689">Ribosomal protein</keyword>
<keyword id="KW-0694">RNA-binding</keyword>
<keyword id="KW-0699">rRNA-binding</keyword>